<accession>B7IXL2</accession>
<feature type="chain" id="PRO_1000132492" description="Probable glycine dehydrogenase (decarboxylating) subunit 2">
    <location>
        <begin position="1"/>
        <end position="491"/>
    </location>
</feature>
<feature type="modified residue" description="N6-(pyridoxal phosphate)lysine" evidence="1">
    <location>
        <position position="273"/>
    </location>
</feature>
<name>GCSPB_BACC2</name>
<protein>
    <recommendedName>
        <fullName evidence="1">Probable glycine dehydrogenase (decarboxylating) subunit 2</fullName>
        <ecNumber evidence="1">1.4.4.2</ecNumber>
    </recommendedName>
    <alternativeName>
        <fullName evidence="1">Glycine cleavage system P-protein subunit 2</fullName>
    </alternativeName>
    <alternativeName>
        <fullName evidence="1">Glycine decarboxylase subunit 2</fullName>
    </alternativeName>
    <alternativeName>
        <fullName evidence="1">Glycine dehydrogenase (aminomethyl-transferring) subunit 2</fullName>
    </alternativeName>
</protein>
<gene>
    <name evidence="1" type="primary">gcvPB</name>
    <name type="ordered locus">BCG9842_B0903</name>
</gene>
<dbReference type="EC" id="1.4.4.2" evidence="1"/>
<dbReference type="EMBL" id="CP001186">
    <property type="protein sequence ID" value="ACK95132.1"/>
    <property type="molecule type" value="Genomic_DNA"/>
</dbReference>
<dbReference type="RefSeq" id="WP_000795713.1">
    <property type="nucleotide sequence ID" value="NC_011772.1"/>
</dbReference>
<dbReference type="SMR" id="B7IXL2"/>
<dbReference type="KEGG" id="bcg:BCG9842_B0903"/>
<dbReference type="HOGENOM" id="CLU_004620_5_0_9"/>
<dbReference type="Proteomes" id="UP000006744">
    <property type="component" value="Chromosome"/>
</dbReference>
<dbReference type="GO" id="GO:0005829">
    <property type="term" value="C:cytosol"/>
    <property type="evidence" value="ECO:0007669"/>
    <property type="project" value="TreeGrafter"/>
</dbReference>
<dbReference type="GO" id="GO:0005960">
    <property type="term" value="C:glycine cleavage complex"/>
    <property type="evidence" value="ECO:0007669"/>
    <property type="project" value="TreeGrafter"/>
</dbReference>
<dbReference type="GO" id="GO:0016594">
    <property type="term" value="F:glycine binding"/>
    <property type="evidence" value="ECO:0007669"/>
    <property type="project" value="TreeGrafter"/>
</dbReference>
<dbReference type="GO" id="GO:0004375">
    <property type="term" value="F:glycine dehydrogenase (decarboxylating) activity"/>
    <property type="evidence" value="ECO:0007669"/>
    <property type="project" value="UniProtKB-EC"/>
</dbReference>
<dbReference type="GO" id="GO:0030170">
    <property type="term" value="F:pyridoxal phosphate binding"/>
    <property type="evidence" value="ECO:0007669"/>
    <property type="project" value="TreeGrafter"/>
</dbReference>
<dbReference type="GO" id="GO:0019464">
    <property type="term" value="P:glycine decarboxylation via glycine cleavage system"/>
    <property type="evidence" value="ECO:0007669"/>
    <property type="project" value="UniProtKB-UniRule"/>
</dbReference>
<dbReference type="CDD" id="cd00613">
    <property type="entry name" value="GDC-P"/>
    <property type="match status" value="1"/>
</dbReference>
<dbReference type="FunFam" id="3.40.640.10:FF:000034">
    <property type="entry name" value="Probable glycine dehydrogenase (decarboxylating) subunit 2"/>
    <property type="match status" value="1"/>
</dbReference>
<dbReference type="FunFam" id="3.90.1150.10:FF:000014">
    <property type="entry name" value="Probable glycine dehydrogenase (decarboxylating) subunit 2"/>
    <property type="match status" value="1"/>
</dbReference>
<dbReference type="Gene3D" id="6.20.440.10">
    <property type="match status" value="1"/>
</dbReference>
<dbReference type="Gene3D" id="3.90.1150.10">
    <property type="entry name" value="Aspartate Aminotransferase, domain 1"/>
    <property type="match status" value="1"/>
</dbReference>
<dbReference type="Gene3D" id="3.40.640.10">
    <property type="entry name" value="Type I PLP-dependent aspartate aminotransferase-like (Major domain)"/>
    <property type="match status" value="1"/>
</dbReference>
<dbReference type="HAMAP" id="MF_00713">
    <property type="entry name" value="GcvPB"/>
    <property type="match status" value="1"/>
</dbReference>
<dbReference type="InterPro" id="IPR023012">
    <property type="entry name" value="GcvPB"/>
</dbReference>
<dbReference type="InterPro" id="IPR049316">
    <property type="entry name" value="GDC-P_C"/>
</dbReference>
<dbReference type="InterPro" id="IPR049315">
    <property type="entry name" value="GDC-P_N"/>
</dbReference>
<dbReference type="InterPro" id="IPR020581">
    <property type="entry name" value="GDC_P"/>
</dbReference>
<dbReference type="InterPro" id="IPR015424">
    <property type="entry name" value="PyrdxlP-dep_Trfase"/>
</dbReference>
<dbReference type="InterPro" id="IPR015421">
    <property type="entry name" value="PyrdxlP-dep_Trfase_major"/>
</dbReference>
<dbReference type="InterPro" id="IPR015422">
    <property type="entry name" value="PyrdxlP-dep_Trfase_small"/>
</dbReference>
<dbReference type="NCBIfam" id="NF003346">
    <property type="entry name" value="PRK04366.1"/>
    <property type="match status" value="1"/>
</dbReference>
<dbReference type="PANTHER" id="PTHR11773:SF1">
    <property type="entry name" value="GLYCINE DEHYDROGENASE (DECARBOXYLATING), MITOCHONDRIAL"/>
    <property type="match status" value="1"/>
</dbReference>
<dbReference type="PANTHER" id="PTHR11773">
    <property type="entry name" value="GLYCINE DEHYDROGENASE, DECARBOXYLATING"/>
    <property type="match status" value="1"/>
</dbReference>
<dbReference type="Pfam" id="PF21478">
    <property type="entry name" value="GcvP2_C"/>
    <property type="match status" value="1"/>
</dbReference>
<dbReference type="Pfam" id="PF02347">
    <property type="entry name" value="GDC-P"/>
    <property type="match status" value="1"/>
</dbReference>
<dbReference type="SUPFAM" id="SSF53383">
    <property type="entry name" value="PLP-dependent transferases"/>
    <property type="match status" value="1"/>
</dbReference>
<organism>
    <name type="scientific">Bacillus cereus (strain G9842)</name>
    <dbReference type="NCBI Taxonomy" id="405531"/>
    <lineage>
        <taxon>Bacteria</taxon>
        <taxon>Bacillati</taxon>
        <taxon>Bacillota</taxon>
        <taxon>Bacilli</taxon>
        <taxon>Bacillales</taxon>
        <taxon>Bacillaceae</taxon>
        <taxon>Bacillus</taxon>
        <taxon>Bacillus cereus group</taxon>
    </lineage>
</organism>
<sequence length="491" mass="54841">MKNQDQALIFEVTKEGRVGYSLPKLDVEEVKLEDVFESDYIRVEDAELPEVSELDIMRHYTALSNRNHGVDSGFYPLGSCTMKYNPKINESVARFAGFANIHPLQDEKTVQGAMELMYDLQEHLIEITGMDTVTLQPAAGAHGEWTGLMLIRAYHEANGDFNRTKVIVPDSAHGTNPASATVAGFETITVKSNENGLVDLEDLKRVVNEETAALMLTNPNTLGLFEENILEMAEIVHNAGGKLYYDGANLNAVLSQARPGDMGFDVVHLNLHKTFTGPHGGGGPGSGPVGVKADLIPYLPKPILEKTENGYHFNYDRPEAIGRVKPFYGNFGINVRAYTYIRSMGPDGLRAVTEYAVLNANYMMRRLAPFYDLPFNRHCKHEFVLSGRRQKKLGVRTLDIAKRLLDFGYHPPTIYFPLNVEECIMIEPTETESKETLDGFIDKMIQIAKEVEENPEVVQEAPHTTVIKRLDETMAARKPVLRYAKPAPVQV</sequence>
<keyword id="KW-0560">Oxidoreductase</keyword>
<keyword id="KW-0663">Pyridoxal phosphate</keyword>
<proteinExistence type="inferred from homology"/>
<reference key="1">
    <citation type="submission" date="2008-10" db="EMBL/GenBank/DDBJ databases">
        <title>Genome sequence of Bacillus cereus G9842.</title>
        <authorList>
            <person name="Dodson R.J."/>
            <person name="Durkin A.S."/>
            <person name="Rosovitz M.J."/>
            <person name="Rasko D.A."/>
            <person name="Hoffmaster A."/>
            <person name="Ravel J."/>
            <person name="Sutton G."/>
        </authorList>
    </citation>
    <scope>NUCLEOTIDE SEQUENCE [LARGE SCALE GENOMIC DNA]</scope>
    <source>
        <strain>G9842</strain>
    </source>
</reference>
<comment type="function">
    <text evidence="1">The glycine cleavage system catalyzes the degradation of glycine. The P protein binds the alpha-amino group of glycine through its pyridoxal phosphate cofactor; CO(2) is released and the remaining methylamine moiety is then transferred to the lipoamide cofactor of the H protein.</text>
</comment>
<comment type="catalytic activity">
    <reaction evidence="1">
        <text>N(6)-[(R)-lipoyl]-L-lysyl-[glycine-cleavage complex H protein] + glycine + H(+) = N(6)-[(R)-S(8)-aminomethyldihydrolipoyl]-L-lysyl-[glycine-cleavage complex H protein] + CO2</text>
        <dbReference type="Rhea" id="RHEA:24304"/>
        <dbReference type="Rhea" id="RHEA-COMP:10494"/>
        <dbReference type="Rhea" id="RHEA-COMP:10495"/>
        <dbReference type="ChEBI" id="CHEBI:15378"/>
        <dbReference type="ChEBI" id="CHEBI:16526"/>
        <dbReference type="ChEBI" id="CHEBI:57305"/>
        <dbReference type="ChEBI" id="CHEBI:83099"/>
        <dbReference type="ChEBI" id="CHEBI:83143"/>
        <dbReference type="EC" id="1.4.4.2"/>
    </reaction>
</comment>
<comment type="cofactor">
    <cofactor evidence="1">
        <name>pyridoxal 5'-phosphate</name>
        <dbReference type="ChEBI" id="CHEBI:597326"/>
    </cofactor>
</comment>
<comment type="subunit">
    <text evidence="1">The glycine cleavage system is composed of four proteins: P, T, L and H. In this organism, the P 'protein' is a heterodimer of two subunits.</text>
</comment>
<comment type="similarity">
    <text evidence="1">Belongs to the GcvP family. C-terminal subunit subfamily.</text>
</comment>
<evidence type="ECO:0000255" key="1">
    <source>
        <dbReference type="HAMAP-Rule" id="MF_00713"/>
    </source>
</evidence>